<proteinExistence type="inferred from homology"/>
<gene>
    <name type="ordered locus">EF_2866</name>
</gene>
<comment type="subcellular location">
    <subcellularLocation>
        <location evidence="1">Cytoplasm</location>
    </subcellularLocation>
</comment>
<comment type="similarity">
    <text evidence="1">Belongs to the TACO1 family. YeeN subfamily.</text>
</comment>
<name>Y2866_ENTFA</name>
<sequence>MGRKWANIKEKKAAKDANNSRVYAKFGIEIYVAAKSGDPDPHANQKLRFVIERAKTYNVPKHIIDRAIEKAKGSADEQYSELRYEGFGPNGSMVIVDALTNNVNRTAADVRAAFGKNGGNMGVSGAVSYMFDNTGIIGFAGDDADEILEYLMEKDIDVRDVVEEDGQIIVYTEPEDFHHAQEALKEKGIEEFTVTELEMVPQNEVTLEGDDLGNFEKMLDVLEDLEDVQKVHHNVDLPE</sequence>
<reference key="1">
    <citation type="journal article" date="2003" name="Science">
        <title>Role of mobile DNA in the evolution of vancomycin-resistant Enterococcus faecalis.</title>
        <authorList>
            <person name="Paulsen I.T."/>
            <person name="Banerjei L."/>
            <person name="Myers G.S.A."/>
            <person name="Nelson K.E."/>
            <person name="Seshadri R."/>
            <person name="Read T.D."/>
            <person name="Fouts D.E."/>
            <person name="Eisen J.A."/>
            <person name="Gill S.R."/>
            <person name="Heidelberg J.F."/>
            <person name="Tettelin H."/>
            <person name="Dodson R.J."/>
            <person name="Umayam L.A."/>
            <person name="Brinkac L.M."/>
            <person name="Beanan M.J."/>
            <person name="Daugherty S.C."/>
            <person name="DeBoy R.T."/>
            <person name="Durkin S.A."/>
            <person name="Kolonay J.F."/>
            <person name="Madupu R."/>
            <person name="Nelson W.C."/>
            <person name="Vamathevan J.J."/>
            <person name="Tran B."/>
            <person name="Upton J."/>
            <person name="Hansen T."/>
            <person name="Shetty J."/>
            <person name="Khouri H.M."/>
            <person name="Utterback T.R."/>
            <person name="Radune D."/>
            <person name="Ketchum K.A."/>
            <person name="Dougherty B.A."/>
            <person name="Fraser C.M."/>
        </authorList>
    </citation>
    <scope>NUCLEOTIDE SEQUENCE [LARGE SCALE GENOMIC DNA]</scope>
    <source>
        <strain>ATCC 700802 / V583</strain>
    </source>
</reference>
<keyword id="KW-0963">Cytoplasm</keyword>
<keyword id="KW-0238">DNA-binding</keyword>
<keyword id="KW-1185">Reference proteome</keyword>
<keyword id="KW-0804">Transcription</keyword>
<keyword id="KW-0805">Transcription regulation</keyword>
<evidence type="ECO:0000255" key="1">
    <source>
        <dbReference type="HAMAP-Rule" id="MF_00918"/>
    </source>
</evidence>
<protein>
    <recommendedName>
        <fullName evidence="1">Probable transcriptional regulatory protein EF_2866</fullName>
    </recommendedName>
</protein>
<organism>
    <name type="scientific">Enterococcus faecalis (strain ATCC 700802 / V583)</name>
    <dbReference type="NCBI Taxonomy" id="226185"/>
    <lineage>
        <taxon>Bacteria</taxon>
        <taxon>Bacillati</taxon>
        <taxon>Bacillota</taxon>
        <taxon>Bacilli</taxon>
        <taxon>Lactobacillales</taxon>
        <taxon>Enterococcaceae</taxon>
        <taxon>Enterococcus</taxon>
    </lineage>
</organism>
<feature type="chain" id="PRO_0000175809" description="Probable transcriptional regulatory protein EF_2866">
    <location>
        <begin position="1"/>
        <end position="239"/>
    </location>
</feature>
<accession>Q830C3</accession>
<dbReference type="EMBL" id="AE016830">
    <property type="protein sequence ID" value="AAO82557.1"/>
    <property type="molecule type" value="Genomic_DNA"/>
</dbReference>
<dbReference type="RefSeq" id="NP_816487.1">
    <property type="nucleotide sequence ID" value="NC_004668.1"/>
</dbReference>
<dbReference type="RefSeq" id="WP_002362464.1">
    <property type="nucleotide sequence ID" value="NZ_KE136528.1"/>
</dbReference>
<dbReference type="SMR" id="Q830C3"/>
<dbReference type="STRING" id="226185.EF_2866"/>
<dbReference type="EnsemblBacteria" id="AAO82557">
    <property type="protein sequence ID" value="AAO82557"/>
    <property type="gene ID" value="EF_2866"/>
</dbReference>
<dbReference type="KEGG" id="efa:EF2866"/>
<dbReference type="PATRIC" id="fig|226185.45.peg.707"/>
<dbReference type="eggNOG" id="COG0217">
    <property type="taxonomic scope" value="Bacteria"/>
</dbReference>
<dbReference type="HOGENOM" id="CLU_062974_2_0_9"/>
<dbReference type="Proteomes" id="UP000001415">
    <property type="component" value="Chromosome"/>
</dbReference>
<dbReference type="GO" id="GO:0005829">
    <property type="term" value="C:cytosol"/>
    <property type="evidence" value="ECO:0007669"/>
    <property type="project" value="TreeGrafter"/>
</dbReference>
<dbReference type="GO" id="GO:0003677">
    <property type="term" value="F:DNA binding"/>
    <property type="evidence" value="ECO:0007669"/>
    <property type="project" value="UniProtKB-UniRule"/>
</dbReference>
<dbReference type="GO" id="GO:0006355">
    <property type="term" value="P:regulation of DNA-templated transcription"/>
    <property type="evidence" value="ECO:0007669"/>
    <property type="project" value="UniProtKB-UniRule"/>
</dbReference>
<dbReference type="FunFam" id="1.10.10.200:FF:000003">
    <property type="entry name" value="Probable transcriptional regulatory protein YeeN"/>
    <property type="match status" value="1"/>
</dbReference>
<dbReference type="FunFam" id="3.30.70.980:FF:000004">
    <property type="entry name" value="Probable transcriptional regulatory protein YeeN"/>
    <property type="match status" value="1"/>
</dbReference>
<dbReference type="Gene3D" id="1.10.10.200">
    <property type="match status" value="1"/>
</dbReference>
<dbReference type="Gene3D" id="3.30.70.980">
    <property type="match status" value="2"/>
</dbReference>
<dbReference type="HAMAP" id="MF_00693">
    <property type="entry name" value="Transcrip_reg_TACO1"/>
    <property type="match status" value="1"/>
</dbReference>
<dbReference type="HAMAP" id="MF_00918">
    <property type="entry name" value="Transcrip_reg_TACO1_YeeN"/>
    <property type="match status" value="1"/>
</dbReference>
<dbReference type="InterPro" id="IPR017856">
    <property type="entry name" value="Integrase-like_N"/>
</dbReference>
<dbReference type="InterPro" id="IPR048300">
    <property type="entry name" value="TACO1_YebC-like_2nd/3rd_dom"/>
</dbReference>
<dbReference type="InterPro" id="IPR049083">
    <property type="entry name" value="TACO1_YebC_N"/>
</dbReference>
<dbReference type="InterPro" id="IPR002876">
    <property type="entry name" value="Transcrip_reg_TACO1-like"/>
</dbReference>
<dbReference type="InterPro" id="IPR026564">
    <property type="entry name" value="Transcrip_reg_TACO1-like_dom3"/>
</dbReference>
<dbReference type="InterPro" id="IPR026562">
    <property type="entry name" value="Transcrip_reg_TACO1_YeeN"/>
</dbReference>
<dbReference type="InterPro" id="IPR029072">
    <property type="entry name" value="YebC-like"/>
</dbReference>
<dbReference type="NCBIfam" id="NF001030">
    <property type="entry name" value="PRK00110.1"/>
    <property type="match status" value="1"/>
</dbReference>
<dbReference type="NCBIfam" id="NF009044">
    <property type="entry name" value="PRK12378.1"/>
    <property type="match status" value="1"/>
</dbReference>
<dbReference type="NCBIfam" id="TIGR01033">
    <property type="entry name" value="YebC/PmpR family DNA-binding transcriptional regulator"/>
    <property type="match status" value="1"/>
</dbReference>
<dbReference type="PANTHER" id="PTHR12532">
    <property type="entry name" value="TRANSLATIONAL ACTIVATOR OF CYTOCHROME C OXIDASE 1"/>
    <property type="match status" value="1"/>
</dbReference>
<dbReference type="PANTHER" id="PTHR12532:SF0">
    <property type="entry name" value="TRANSLATIONAL ACTIVATOR OF CYTOCHROME C OXIDASE 1"/>
    <property type="match status" value="1"/>
</dbReference>
<dbReference type="Pfam" id="PF20772">
    <property type="entry name" value="TACO1_YebC_N"/>
    <property type="match status" value="1"/>
</dbReference>
<dbReference type="Pfam" id="PF01709">
    <property type="entry name" value="Transcrip_reg"/>
    <property type="match status" value="1"/>
</dbReference>
<dbReference type="SUPFAM" id="SSF75625">
    <property type="entry name" value="YebC-like"/>
    <property type="match status" value="1"/>
</dbReference>